<evidence type="ECO:0000255" key="1">
    <source>
        <dbReference type="PROSITE-ProRule" id="PRU00267"/>
    </source>
</evidence>
<name>AES1_ALLMI</name>
<organism>
    <name type="scientific">Alligator mississippiensis</name>
    <name type="common">American alligator</name>
    <dbReference type="NCBI Taxonomy" id="8496"/>
    <lineage>
        <taxon>Eukaryota</taxon>
        <taxon>Metazoa</taxon>
        <taxon>Chordata</taxon>
        <taxon>Craniata</taxon>
        <taxon>Vertebrata</taxon>
        <taxon>Euteleostomi</taxon>
        <taxon>Archelosauria</taxon>
        <taxon>Archosauria</taxon>
        <taxon>Crocodylia</taxon>
        <taxon>Alligatoridae</taxon>
        <taxon>Alligatorinae</taxon>
        <taxon>Alligator</taxon>
    </lineage>
</organism>
<keyword id="KW-0238">DNA-binding</keyword>
<keyword id="KW-0539">Nucleus</keyword>
<accession>P40637</accession>
<reference key="1">
    <citation type="journal article" date="1993" name="PCR Methods Appl.">
        <title>PCR amplification of SRY-related gene sequences reveals evolutionary conservation of the SRY-box motif.</title>
        <authorList>
            <person name="Coriat A.M."/>
            <person name="Mueller U."/>
            <person name="Harry J.L."/>
            <person name="Uwanogho D."/>
            <person name="Sharpe P.T."/>
        </authorList>
    </citation>
    <scope>NUCLEOTIDE SEQUENCE [GENOMIC DNA]</scope>
</reference>
<comment type="subcellular location">
    <subcellularLocation>
        <location evidence="1">Nucleus</location>
    </subcellularLocation>
</comment>
<proteinExistence type="inferred from homology"/>
<sequence>VKRPMNAFMVWSQIERRKIMEQSPDMHNAEISKRLGKRWKLLKGSDKIPFIREAERLRLKHMADYPDYKYRP</sequence>
<protein>
    <recommendedName>
        <fullName>SRY-related protein AES1</fullName>
    </recommendedName>
</protein>
<dbReference type="EMBL" id="M86313">
    <property type="protein sequence ID" value="AAA48526.1"/>
    <property type="molecule type" value="Genomic_DNA"/>
</dbReference>
<dbReference type="PIR" id="I50022">
    <property type="entry name" value="I50022"/>
</dbReference>
<dbReference type="SMR" id="P40637"/>
<dbReference type="GO" id="GO:0005634">
    <property type="term" value="C:nucleus"/>
    <property type="evidence" value="ECO:0007669"/>
    <property type="project" value="UniProtKB-SubCell"/>
</dbReference>
<dbReference type="GO" id="GO:0001228">
    <property type="term" value="F:DNA-binding transcription activator activity, RNA polymerase II-specific"/>
    <property type="evidence" value="ECO:0007669"/>
    <property type="project" value="TreeGrafter"/>
</dbReference>
<dbReference type="GO" id="GO:0000978">
    <property type="term" value="F:RNA polymerase II cis-regulatory region sequence-specific DNA binding"/>
    <property type="evidence" value="ECO:0007669"/>
    <property type="project" value="TreeGrafter"/>
</dbReference>
<dbReference type="GO" id="GO:0007420">
    <property type="term" value="P:brain development"/>
    <property type="evidence" value="ECO:0007669"/>
    <property type="project" value="TreeGrafter"/>
</dbReference>
<dbReference type="GO" id="GO:0048593">
    <property type="term" value="P:camera-type eye morphogenesis"/>
    <property type="evidence" value="ECO:0007669"/>
    <property type="project" value="TreeGrafter"/>
</dbReference>
<dbReference type="GO" id="GO:0000122">
    <property type="term" value="P:negative regulation of transcription by RNA polymerase II"/>
    <property type="evidence" value="ECO:0007669"/>
    <property type="project" value="TreeGrafter"/>
</dbReference>
<dbReference type="GO" id="GO:0030182">
    <property type="term" value="P:neuron differentiation"/>
    <property type="evidence" value="ECO:0007669"/>
    <property type="project" value="TreeGrafter"/>
</dbReference>
<dbReference type="CDD" id="cd22029">
    <property type="entry name" value="HMG-box_SoxC"/>
    <property type="match status" value="1"/>
</dbReference>
<dbReference type="FunFam" id="1.10.30.10:FF:000007">
    <property type="entry name" value="Transcription factor SOX"/>
    <property type="match status" value="1"/>
</dbReference>
<dbReference type="Gene3D" id="1.10.30.10">
    <property type="entry name" value="High mobility group box domain"/>
    <property type="match status" value="1"/>
</dbReference>
<dbReference type="InterPro" id="IPR009071">
    <property type="entry name" value="HMG_box_dom"/>
</dbReference>
<dbReference type="InterPro" id="IPR036910">
    <property type="entry name" value="HMG_box_dom_sf"/>
</dbReference>
<dbReference type="InterPro" id="IPR050140">
    <property type="entry name" value="SRY-related_HMG-box_TF-like"/>
</dbReference>
<dbReference type="PANTHER" id="PTHR10270">
    <property type="entry name" value="SOX TRANSCRIPTION FACTOR"/>
    <property type="match status" value="1"/>
</dbReference>
<dbReference type="PANTHER" id="PTHR10270:SF27">
    <property type="entry name" value="TRANSCRIPTION FACTOR SOX-4"/>
    <property type="match status" value="1"/>
</dbReference>
<dbReference type="Pfam" id="PF00505">
    <property type="entry name" value="HMG_box"/>
    <property type="match status" value="1"/>
</dbReference>
<dbReference type="PRINTS" id="PR00886">
    <property type="entry name" value="HIGHMOBLTY12"/>
</dbReference>
<dbReference type="SMART" id="SM00398">
    <property type="entry name" value="HMG"/>
    <property type="match status" value="1"/>
</dbReference>
<dbReference type="SUPFAM" id="SSF47095">
    <property type="entry name" value="HMG-box"/>
    <property type="match status" value="1"/>
</dbReference>
<dbReference type="PROSITE" id="PS50118">
    <property type="entry name" value="HMG_BOX_2"/>
    <property type="match status" value="1"/>
</dbReference>
<feature type="chain" id="PRO_0000048790" description="SRY-related protein AES1">
    <location>
        <begin position="1" status="less than"/>
        <end position="72" status="greater than"/>
    </location>
</feature>
<feature type="DNA-binding region" description="HMG box" evidence="1">
    <location>
        <begin position="1"/>
        <end position="69"/>
    </location>
</feature>
<feature type="non-terminal residue">
    <location>
        <position position="1"/>
    </location>
</feature>
<feature type="non-terminal residue">
    <location>
        <position position="72"/>
    </location>
</feature>